<keyword id="KW-0997">Cell inner membrane</keyword>
<keyword id="KW-1003">Cell membrane</keyword>
<keyword id="KW-0460">Magnesium</keyword>
<keyword id="KW-0472">Membrane</keyword>
<keyword id="KW-1185">Reference proteome</keyword>
<keyword id="KW-0808">Transferase</keyword>
<keyword id="KW-0812">Transmembrane</keyword>
<keyword id="KW-1133">Transmembrane helix</keyword>
<keyword id="KW-0831">Ubiquinone biosynthesis</keyword>
<sequence length="290" mass="32556">MFAFVEQRYPTLWPYIQLMRLDRPIGTLLLLWPTLWAVWIAGAGTPSLTVIVVFFLGVVIMRAAGCVINDFADRNFDGDVERTQGRPLATGALSAKQALALFGGLGLLAFGLVLFLNELTFWLSFGGLGLAVLYPFTKRFTFMPQLFLGAAFSWAIPMAFAAETGEVPEIAWLLYVANVLWTVAYDTEYAMCDREDDLKLGIKSTAILFGDADRLMIAILQALTLLALIMVGHRLGFSWPWYAGLVGMSLSFAFQHSLIRYRERWPSFHAFLNNHWAGACVFIGLYFQYF</sequence>
<reference key="1">
    <citation type="journal article" date="2006" name="Nat. Biotechnol.">
        <title>Genome sequence of the ubiquitous hydrocarbon-degrading marine bacterium Alcanivorax borkumensis.</title>
        <authorList>
            <person name="Schneiker S."/>
            <person name="Martins dos Santos V.A.P."/>
            <person name="Bartels D."/>
            <person name="Bekel T."/>
            <person name="Brecht M."/>
            <person name="Buhrmester J."/>
            <person name="Chernikova T.N."/>
            <person name="Denaro R."/>
            <person name="Ferrer M."/>
            <person name="Gertler C."/>
            <person name="Goesmann A."/>
            <person name="Golyshina O.V."/>
            <person name="Kaminski F."/>
            <person name="Khachane A.N."/>
            <person name="Lang S."/>
            <person name="Linke B."/>
            <person name="McHardy A.C."/>
            <person name="Meyer F."/>
            <person name="Nechitaylo T."/>
            <person name="Puehler A."/>
            <person name="Regenhardt D."/>
            <person name="Rupp O."/>
            <person name="Sabirova J.S."/>
            <person name="Selbitschka W."/>
            <person name="Yakimov M.M."/>
            <person name="Timmis K.N."/>
            <person name="Vorhoelter F.-J."/>
            <person name="Weidner S."/>
            <person name="Kaiser O."/>
            <person name="Golyshin P.N."/>
        </authorList>
    </citation>
    <scope>NUCLEOTIDE SEQUENCE [LARGE SCALE GENOMIC DNA]</scope>
    <source>
        <strain>ATCC 700651 / DSM 11573 / NCIMB 13689 / SK2</strain>
    </source>
</reference>
<accession>Q0VTA7</accession>
<comment type="function">
    <text evidence="1">Catalyzes the prenylation of para-hydroxybenzoate (PHB) with an all-trans polyprenyl group. Mediates the second step in the final reaction sequence of ubiquinone-8 (UQ-8) biosynthesis, which is the condensation of the polyisoprenoid side chain with PHB, generating the first membrane-bound Q intermediate 3-octaprenyl-4-hydroxybenzoate.</text>
</comment>
<comment type="catalytic activity">
    <reaction evidence="1">
        <text>all-trans-octaprenyl diphosphate + 4-hydroxybenzoate = 4-hydroxy-3-(all-trans-octaprenyl)benzoate + diphosphate</text>
        <dbReference type="Rhea" id="RHEA:27782"/>
        <dbReference type="ChEBI" id="CHEBI:1617"/>
        <dbReference type="ChEBI" id="CHEBI:17879"/>
        <dbReference type="ChEBI" id="CHEBI:33019"/>
        <dbReference type="ChEBI" id="CHEBI:57711"/>
        <dbReference type="EC" id="2.5.1.39"/>
    </reaction>
</comment>
<comment type="cofactor">
    <cofactor evidence="1">
        <name>Mg(2+)</name>
        <dbReference type="ChEBI" id="CHEBI:18420"/>
    </cofactor>
</comment>
<comment type="pathway">
    <text evidence="1">Cofactor biosynthesis; ubiquinone biosynthesis.</text>
</comment>
<comment type="subcellular location">
    <subcellularLocation>
        <location evidence="1">Cell inner membrane</location>
        <topology evidence="1">Multi-pass membrane protein</topology>
    </subcellularLocation>
</comment>
<comment type="similarity">
    <text evidence="1">Belongs to the UbiA prenyltransferase family.</text>
</comment>
<organism>
    <name type="scientific">Alcanivorax borkumensis (strain ATCC 700651 / DSM 11573 / NCIMB 13689 / SK2)</name>
    <dbReference type="NCBI Taxonomy" id="393595"/>
    <lineage>
        <taxon>Bacteria</taxon>
        <taxon>Pseudomonadati</taxon>
        <taxon>Pseudomonadota</taxon>
        <taxon>Gammaproteobacteria</taxon>
        <taxon>Oceanospirillales</taxon>
        <taxon>Alcanivoracaceae</taxon>
        <taxon>Alcanivorax</taxon>
    </lineage>
</organism>
<protein>
    <recommendedName>
        <fullName evidence="1">4-hydroxybenzoate octaprenyltransferase</fullName>
        <ecNumber evidence="1">2.5.1.39</ecNumber>
    </recommendedName>
    <alternativeName>
        <fullName evidence="1">4-HB polyprenyltransferase</fullName>
    </alternativeName>
</protein>
<dbReference type="EC" id="2.5.1.39" evidence="1"/>
<dbReference type="EMBL" id="AM286690">
    <property type="protein sequence ID" value="CAL15613.1"/>
    <property type="molecule type" value="Genomic_DNA"/>
</dbReference>
<dbReference type="RefSeq" id="WP_011587462.1">
    <property type="nucleotide sequence ID" value="NC_008260.1"/>
</dbReference>
<dbReference type="SMR" id="Q0VTA7"/>
<dbReference type="STRING" id="393595.ABO_0165"/>
<dbReference type="KEGG" id="abo:ABO_0165"/>
<dbReference type="eggNOG" id="COG0382">
    <property type="taxonomic scope" value="Bacteria"/>
</dbReference>
<dbReference type="HOGENOM" id="CLU_034879_1_0_6"/>
<dbReference type="OrthoDB" id="9782418at2"/>
<dbReference type="UniPathway" id="UPA00232"/>
<dbReference type="Proteomes" id="UP000008871">
    <property type="component" value="Chromosome"/>
</dbReference>
<dbReference type="GO" id="GO:0005886">
    <property type="term" value="C:plasma membrane"/>
    <property type="evidence" value="ECO:0007669"/>
    <property type="project" value="UniProtKB-SubCell"/>
</dbReference>
<dbReference type="GO" id="GO:0008412">
    <property type="term" value="F:4-hydroxybenzoate polyprenyltransferase activity"/>
    <property type="evidence" value="ECO:0007669"/>
    <property type="project" value="UniProtKB-UniRule"/>
</dbReference>
<dbReference type="GO" id="GO:0006744">
    <property type="term" value="P:ubiquinone biosynthetic process"/>
    <property type="evidence" value="ECO:0007669"/>
    <property type="project" value="UniProtKB-UniRule"/>
</dbReference>
<dbReference type="CDD" id="cd13959">
    <property type="entry name" value="PT_UbiA_COQ2"/>
    <property type="match status" value="1"/>
</dbReference>
<dbReference type="FunFam" id="1.10.357.140:FF:000002">
    <property type="entry name" value="4-hydroxybenzoate octaprenyltransferase"/>
    <property type="match status" value="1"/>
</dbReference>
<dbReference type="FunFam" id="1.20.120.1780:FF:000001">
    <property type="entry name" value="4-hydroxybenzoate octaprenyltransferase"/>
    <property type="match status" value="1"/>
</dbReference>
<dbReference type="Gene3D" id="1.10.357.140">
    <property type="entry name" value="UbiA prenyltransferase"/>
    <property type="match status" value="1"/>
</dbReference>
<dbReference type="Gene3D" id="1.20.120.1780">
    <property type="entry name" value="UbiA prenyltransferase"/>
    <property type="match status" value="1"/>
</dbReference>
<dbReference type="HAMAP" id="MF_01635">
    <property type="entry name" value="UbiA"/>
    <property type="match status" value="1"/>
</dbReference>
<dbReference type="InterPro" id="IPR006370">
    <property type="entry name" value="HB_polyprenyltransferase-like"/>
</dbReference>
<dbReference type="InterPro" id="IPR039653">
    <property type="entry name" value="Prenyltransferase"/>
</dbReference>
<dbReference type="InterPro" id="IPR000537">
    <property type="entry name" value="UbiA_prenyltransferase"/>
</dbReference>
<dbReference type="InterPro" id="IPR030470">
    <property type="entry name" value="UbiA_prenylTrfase_CS"/>
</dbReference>
<dbReference type="InterPro" id="IPR044878">
    <property type="entry name" value="UbiA_sf"/>
</dbReference>
<dbReference type="NCBIfam" id="TIGR01474">
    <property type="entry name" value="ubiA_proteo"/>
    <property type="match status" value="1"/>
</dbReference>
<dbReference type="PANTHER" id="PTHR11048:SF28">
    <property type="entry name" value="4-HYDROXYBENZOATE POLYPRENYLTRANSFERASE, MITOCHONDRIAL"/>
    <property type="match status" value="1"/>
</dbReference>
<dbReference type="PANTHER" id="PTHR11048">
    <property type="entry name" value="PRENYLTRANSFERASES"/>
    <property type="match status" value="1"/>
</dbReference>
<dbReference type="Pfam" id="PF01040">
    <property type="entry name" value="UbiA"/>
    <property type="match status" value="1"/>
</dbReference>
<dbReference type="PROSITE" id="PS00943">
    <property type="entry name" value="UBIA"/>
    <property type="match status" value="1"/>
</dbReference>
<feature type="chain" id="PRO_0000262776" description="4-hydroxybenzoate octaprenyltransferase">
    <location>
        <begin position="1"/>
        <end position="290"/>
    </location>
</feature>
<feature type="transmembrane region" description="Helical" evidence="1">
    <location>
        <begin position="40"/>
        <end position="60"/>
    </location>
</feature>
<feature type="transmembrane region" description="Helical" evidence="1">
    <location>
        <begin position="99"/>
        <end position="119"/>
    </location>
</feature>
<feature type="transmembrane region" description="Helical" evidence="1">
    <location>
        <begin position="120"/>
        <end position="140"/>
    </location>
</feature>
<feature type="transmembrane region" description="Helical" evidence="1">
    <location>
        <begin position="142"/>
        <end position="162"/>
    </location>
</feature>
<feature type="transmembrane region" description="Helical" evidence="1">
    <location>
        <begin position="165"/>
        <end position="185"/>
    </location>
</feature>
<feature type="transmembrane region" description="Helical" evidence="1">
    <location>
        <begin position="215"/>
        <end position="235"/>
    </location>
</feature>
<feature type="transmembrane region" description="Helical" evidence="1">
    <location>
        <begin position="239"/>
        <end position="259"/>
    </location>
</feature>
<feature type="transmembrane region" description="Helical" evidence="1">
    <location>
        <begin position="267"/>
        <end position="287"/>
    </location>
</feature>
<proteinExistence type="inferred from homology"/>
<name>UBIA_ALCBS</name>
<gene>
    <name evidence="1" type="primary">ubiA</name>
    <name type="ordered locus">ABO_0165</name>
</gene>
<evidence type="ECO:0000255" key="1">
    <source>
        <dbReference type="HAMAP-Rule" id="MF_01635"/>
    </source>
</evidence>